<gene>
    <name evidence="1" type="primary">panC</name>
    <name type="ordered locus">NT01EI_0785</name>
</gene>
<protein>
    <recommendedName>
        <fullName evidence="1">Pantothenate synthetase</fullName>
        <shortName evidence="1">PS</shortName>
        <ecNumber evidence="1">6.3.2.1</ecNumber>
    </recommendedName>
    <alternativeName>
        <fullName evidence="1">Pantoate--beta-alanine ligase</fullName>
    </alternativeName>
    <alternativeName>
        <fullName evidence="1">Pantoate-activating enzyme</fullName>
    </alternativeName>
</protein>
<evidence type="ECO:0000255" key="1">
    <source>
        <dbReference type="HAMAP-Rule" id="MF_00158"/>
    </source>
</evidence>
<reference key="1">
    <citation type="submission" date="2009-03" db="EMBL/GenBank/DDBJ databases">
        <title>Complete genome sequence of Edwardsiella ictaluri 93-146.</title>
        <authorList>
            <person name="Williams M.L."/>
            <person name="Gillaspy A.F."/>
            <person name="Dyer D.W."/>
            <person name="Thune R.L."/>
            <person name="Waldbieser G.C."/>
            <person name="Schuster S.C."/>
            <person name="Gipson J."/>
            <person name="Zaitshik J."/>
            <person name="Landry C."/>
            <person name="Lawrence M.L."/>
        </authorList>
    </citation>
    <scope>NUCLEOTIDE SEQUENCE [LARGE SCALE GENOMIC DNA]</scope>
    <source>
        <strain>93-146</strain>
    </source>
</reference>
<dbReference type="EC" id="6.3.2.1" evidence="1"/>
<dbReference type="EMBL" id="CP001600">
    <property type="protein sequence ID" value="ACR68006.1"/>
    <property type="molecule type" value="Genomic_DNA"/>
</dbReference>
<dbReference type="RefSeq" id="WP_015870199.1">
    <property type="nucleotide sequence ID" value="NZ_CP169062.1"/>
</dbReference>
<dbReference type="SMR" id="C5B9K5"/>
<dbReference type="STRING" id="67780.B6E78_14545"/>
<dbReference type="GeneID" id="69537843"/>
<dbReference type="KEGG" id="eic:NT01EI_0785"/>
<dbReference type="PATRIC" id="fig|634503.3.peg.711"/>
<dbReference type="HOGENOM" id="CLU_047148_0_0_6"/>
<dbReference type="OrthoDB" id="9773087at2"/>
<dbReference type="UniPathway" id="UPA00028">
    <property type="reaction ID" value="UER00005"/>
</dbReference>
<dbReference type="Proteomes" id="UP000001485">
    <property type="component" value="Chromosome"/>
</dbReference>
<dbReference type="GO" id="GO:0005829">
    <property type="term" value="C:cytosol"/>
    <property type="evidence" value="ECO:0007669"/>
    <property type="project" value="TreeGrafter"/>
</dbReference>
<dbReference type="GO" id="GO:0005524">
    <property type="term" value="F:ATP binding"/>
    <property type="evidence" value="ECO:0007669"/>
    <property type="project" value="UniProtKB-KW"/>
</dbReference>
<dbReference type="GO" id="GO:0004592">
    <property type="term" value="F:pantoate-beta-alanine ligase activity"/>
    <property type="evidence" value="ECO:0007669"/>
    <property type="project" value="UniProtKB-UniRule"/>
</dbReference>
<dbReference type="GO" id="GO:0015940">
    <property type="term" value="P:pantothenate biosynthetic process"/>
    <property type="evidence" value="ECO:0007669"/>
    <property type="project" value="UniProtKB-UniRule"/>
</dbReference>
<dbReference type="CDD" id="cd00560">
    <property type="entry name" value="PanC"/>
    <property type="match status" value="1"/>
</dbReference>
<dbReference type="FunFam" id="3.30.1300.10:FF:000001">
    <property type="entry name" value="Pantothenate synthetase"/>
    <property type="match status" value="1"/>
</dbReference>
<dbReference type="FunFam" id="3.40.50.620:FF:000013">
    <property type="entry name" value="Pantothenate synthetase"/>
    <property type="match status" value="1"/>
</dbReference>
<dbReference type="Gene3D" id="3.40.50.620">
    <property type="entry name" value="HUPs"/>
    <property type="match status" value="1"/>
</dbReference>
<dbReference type="Gene3D" id="3.30.1300.10">
    <property type="entry name" value="Pantoate-beta-alanine ligase, C-terminal domain"/>
    <property type="match status" value="1"/>
</dbReference>
<dbReference type="HAMAP" id="MF_00158">
    <property type="entry name" value="PanC"/>
    <property type="match status" value="1"/>
</dbReference>
<dbReference type="InterPro" id="IPR003721">
    <property type="entry name" value="Pantoate_ligase"/>
</dbReference>
<dbReference type="InterPro" id="IPR042176">
    <property type="entry name" value="Pantoate_ligase_C"/>
</dbReference>
<dbReference type="InterPro" id="IPR014729">
    <property type="entry name" value="Rossmann-like_a/b/a_fold"/>
</dbReference>
<dbReference type="NCBIfam" id="TIGR00018">
    <property type="entry name" value="panC"/>
    <property type="match status" value="1"/>
</dbReference>
<dbReference type="PANTHER" id="PTHR21299">
    <property type="entry name" value="CYTIDYLATE KINASE/PANTOATE-BETA-ALANINE LIGASE"/>
    <property type="match status" value="1"/>
</dbReference>
<dbReference type="PANTHER" id="PTHR21299:SF1">
    <property type="entry name" value="PANTOATE--BETA-ALANINE LIGASE"/>
    <property type="match status" value="1"/>
</dbReference>
<dbReference type="Pfam" id="PF02569">
    <property type="entry name" value="Pantoate_ligase"/>
    <property type="match status" value="1"/>
</dbReference>
<dbReference type="SUPFAM" id="SSF52374">
    <property type="entry name" value="Nucleotidylyl transferase"/>
    <property type="match status" value="1"/>
</dbReference>
<comment type="function">
    <text evidence="1">Catalyzes the condensation of pantoate with beta-alanine in an ATP-dependent reaction via a pantoyl-adenylate intermediate.</text>
</comment>
<comment type="catalytic activity">
    <reaction evidence="1">
        <text>(R)-pantoate + beta-alanine + ATP = (R)-pantothenate + AMP + diphosphate + H(+)</text>
        <dbReference type="Rhea" id="RHEA:10912"/>
        <dbReference type="ChEBI" id="CHEBI:15378"/>
        <dbReference type="ChEBI" id="CHEBI:15980"/>
        <dbReference type="ChEBI" id="CHEBI:29032"/>
        <dbReference type="ChEBI" id="CHEBI:30616"/>
        <dbReference type="ChEBI" id="CHEBI:33019"/>
        <dbReference type="ChEBI" id="CHEBI:57966"/>
        <dbReference type="ChEBI" id="CHEBI:456215"/>
        <dbReference type="EC" id="6.3.2.1"/>
    </reaction>
</comment>
<comment type="pathway">
    <text evidence="1">Cofactor biosynthesis; (R)-pantothenate biosynthesis; (R)-pantothenate from (R)-pantoate and beta-alanine: step 1/1.</text>
</comment>
<comment type="subunit">
    <text evidence="1">Homodimer.</text>
</comment>
<comment type="subcellular location">
    <subcellularLocation>
        <location evidence="1">Cytoplasm</location>
    </subcellularLocation>
</comment>
<comment type="miscellaneous">
    <text evidence="1">The reaction proceeds by a bi uni uni bi ping pong mechanism.</text>
</comment>
<comment type="similarity">
    <text evidence="1">Belongs to the pantothenate synthetase family.</text>
</comment>
<organism>
    <name type="scientific">Edwardsiella ictaluri (strain 93-146)</name>
    <dbReference type="NCBI Taxonomy" id="634503"/>
    <lineage>
        <taxon>Bacteria</taxon>
        <taxon>Pseudomonadati</taxon>
        <taxon>Pseudomonadota</taxon>
        <taxon>Gammaproteobacteria</taxon>
        <taxon>Enterobacterales</taxon>
        <taxon>Hafniaceae</taxon>
        <taxon>Edwardsiella</taxon>
    </lineage>
</organism>
<name>PANC_EDWI9</name>
<sequence>MLILETVPLLRREVRRWRQEGKRIALVPTMGNLHDGHMALVNEAHARADVVIVSVFVNPMQFDRPDDLARYPRTLQEDCEQLNRHGVDLVFAPAAEEIYPQGVSQQTYVDVPALSSILEGASRPGHFRGVATIVSKLFNLVQPDLACFGEKDYQQLQLIRKLVADMGYGTEIVGVPIVRGEDGLALSSRNGYLDSDERRLAPRLYNIMMQLASQLENGERDLEALLEQTASRLRQAGFCPDELFIRDADTLGDVNVDTRTAIVLMAAWLGQARLIDNVRIAFNADA</sequence>
<keyword id="KW-0067">ATP-binding</keyword>
<keyword id="KW-0963">Cytoplasm</keyword>
<keyword id="KW-0436">Ligase</keyword>
<keyword id="KW-0547">Nucleotide-binding</keyword>
<keyword id="KW-0566">Pantothenate biosynthesis</keyword>
<accession>C5B9K5</accession>
<proteinExistence type="inferred from homology"/>
<feature type="chain" id="PRO_1000203490" description="Pantothenate synthetase">
    <location>
        <begin position="1"/>
        <end position="286"/>
    </location>
</feature>
<feature type="active site" description="Proton donor" evidence="1">
    <location>
        <position position="37"/>
    </location>
</feature>
<feature type="binding site" evidence="1">
    <location>
        <begin position="30"/>
        <end position="37"/>
    </location>
    <ligand>
        <name>ATP</name>
        <dbReference type="ChEBI" id="CHEBI:30616"/>
    </ligand>
</feature>
<feature type="binding site" evidence="1">
    <location>
        <position position="61"/>
    </location>
    <ligand>
        <name>(R)-pantoate</name>
        <dbReference type="ChEBI" id="CHEBI:15980"/>
    </ligand>
</feature>
<feature type="binding site" evidence="1">
    <location>
        <position position="61"/>
    </location>
    <ligand>
        <name>beta-alanine</name>
        <dbReference type="ChEBI" id="CHEBI:57966"/>
    </ligand>
</feature>
<feature type="binding site" evidence="1">
    <location>
        <begin position="149"/>
        <end position="152"/>
    </location>
    <ligand>
        <name>ATP</name>
        <dbReference type="ChEBI" id="CHEBI:30616"/>
    </ligand>
</feature>
<feature type="binding site" evidence="1">
    <location>
        <position position="155"/>
    </location>
    <ligand>
        <name>(R)-pantoate</name>
        <dbReference type="ChEBI" id="CHEBI:15980"/>
    </ligand>
</feature>
<feature type="binding site" evidence="1">
    <location>
        <position position="178"/>
    </location>
    <ligand>
        <name>ATP</name>
        <dbReference type="ChEBI" id="CHEBI:30616"/>
    </ligand>
</feature>
<feature type="binding site" evidence="1">
    <location>
        <begin position="186"/>
        <end position="189"/>
    </location>
    <ligand>
        <name>ATP</name>
        <dbReference type="ChEBI" id="CHEBI:30616"/>
    </ligand>
</feature>